<protein>
    <recommendedName>
        <fullName evidence="1">4-diphosphocytidyl-2-C-methyl-D-erythritol kinase</fullName>
        <shortName evidence="1">CMK</shortName>
        <ecNumber evidence="1">2.7.1.148</ecNumber>
    </recommendedName>
    <alternativeName>
        <fullName evidence="1">4-(cytidine-5'-diphospho)-2-C-methyl-D-erythritol kinase</fullName>
    </alternativeName>
</protein>
<evidence type="ECO:0000255" key="1">
    <source>
        <dbReference type="HAMAP-Rule" id="MF_00061"/>
    </source>
</evidence>
<gene>
    <name evidence="1" type="primary">ispE</name>
    <name type="synonym">cmeK</name>
    <name type="ordered locus">SAV_3586</name>
</gene>
<dbReference type="EC" id="2.7.1.148" evidence="1"/>
<dbReference type="EMBL" id="BA000030">
    <property type="protein sequence ID" value="BAC71298.1"/>
    <property type="molecule type" value="Genomic_DNA"/>
</dbReference>
<dbReference type="RefSeq" id="WP_010985017.1">
    <property type="nucleotide sequence ID" value="NZ_JZJK01000090.1"/>
</dbReference>
<dbReference type="SMR" id="Q820G3"/>
<dbReference type="GeneID" id="41540651"/>
<dbReference type="KEGG" id="sma:SAVERM_3586"/>
<dbReference type="eggNOG" id="COG1947">
    <property type="taxonomic scope" value="Bacteria"/>
</dbReference>
<dbReference type="HOGENOM" id="CLU_053057_1_1_11"/>
<dbReference type="OrthoDB" id="3173073at2"/>
<dbReference type="UniPathway" id="UPA00056">
    <property type="reaction ID" value="UER00094"/>
</dbReference>
<dbReference type="Proteomes" id="UP000000428">
    <property type="component" value="Chromosome"/>
</dbReference>
<dbReference type="GO" id="GO:0050515">
    <property type="term" value="F:4-(cytidine 5'-diphospho)-2-C-methyl-D-erythritol kinase activity"/>
    <property type="evidence" value="ECO:0007669"/>
    <property type="project" value="UniProtKB-UniRule"/>
</dbReference>
<dbReference type="GO" id="GO:0005524">
    <property type="term" value="F:ATP binding"/>
    <property type="evidence" value="ECO:0007669"/>
    <property type="project" value="UniProtKB-UniRule"/>
</dbReference>
<dbReference type="GO" id="GO:0019288">
    <property type="term" value="P:isopentenyl diphosphate biosynthetic process, methylerythritol 4-phosphate pathway"/>
    <property type="evidence" value="ECO:0007669"/>
    <property type="project" value="UniProtKB-UniRule"/>
</dbReference>
<dbReference type="GO" id="GO:0016114">
    <property type="term" value="P:terpenoid biosynthetic process"/>
    <property type="evidence" value="ECO:0007669"/>
    <property type="project" value="InterPro"/>
</dbReference>
<dbReference type="FunFam" id="3.30.230.10:FF:000076">
    <property type="entry name" value="4-diphosphocytidyl-2-C-methyl-D-erythritol kinase"/>
    <property type="match status" value="1"/>
</dbReference>
<dbReference type="Gene3D" id="3.30.230.10">
    <property type="match status" value="1"/>
</dbReference>
<dbReference type="Gene3D" id="3.30.70.890">
    <property type="entry name" value="GHMP kinase, C-terminal domain"/>
    <property type="match status" value="1"/>
</dbReference>
<dbReference type="HAMAP" id="MF_00061">
    <property type="entry name" value="IspE"/>
    <property type="match status" value="1"/>
</dbReference>
<dbReference type="InterPro" id="IPR013750">
    <property type="entry name" value="GHMP_kinase_C_dom"/>
</dbReference>
<dbReference type="InterPro" id="IPR036554">
    <property type="entry name" value="GHMP_kinase_C_sf"/>
</dbReference>
<dbReference type="InterPro" id="IPR006204">
    <property type="entry name" value="GHMP_kinase_N_dom"/>
</dbReference>
<dbReference type="InterPro" id="IPR004424">
    <property type="entry name" value="IspE"/>
</dbReference>
<dbReference type="InterPro" id="IPR020568">
    <property type="entry name" value="Ribosomal_Su5_D2-typ_SF"/>
</dbReference>
<dbReference type="InterPro" id="IPR014721">
    <property type="entry name" value="Ribsml_uS5_D2-typ_fold_subgr"/>
</dbReference>
<dbReference type="NCBIfam" id="TIGR00154">
    <property type="entry name" value="ispE"/>
    <property type="match status" value="1"/>
</dbReference>
<dbReference type="NCBIfam" id="NF002870">
    <property type="entry name" value="PRK03188.1"/>
    <property type="match status" value="1"/>
</dbReference>
<dbReference type="PANTHER" id="PTHR43527">
    <property type="entry name" value="4-DIPHOSPHOCYTIDYL-2-C-METHYL-D-ERYTHRITOL KINASE, CHLOROPLASTIC"/>
    <property type="match status" value="1"/>
</dbReference>
<dbReference type="PANTHER" id="PTHR43527:SF2">
    <property type="entry name" value="4-DIPHOSPHOCYTIDYL-2-C-METHYL-D-ERYTHRITOL KINASE, CHLOROPLASTIC"/>
    <property type="match status" value="1"/>
</dbReference>
<dbReference type="Pfam" id="PF08544">
    <property type="entry name" value="GHMP_kinases_C"/>
    <property type="match status" value="1"/>
</dbReference>
<dbReference type="Pfam" id="PF00288">
    <property type="entry name" value="GHMP_kinases_N"/>
    <property type="match status" value="1"/>
</dbReference>
<dbReference type="PIRSF" id="PIRSF010376">
    <property type="entry name" value="IspE"/>
    <property type="match status" value="1"/>
</dbReference>
<dbReference type="SUPFAM" id="SSF55060">
    <property type="entry name" value="GHMP Kinase, C-terminal domain"/>
    <property type="match status" value="1"/>
</dbReference>
<dbReference type="SUPFAM" id="SSF54211">
    <property type="entry name" value="Ribosomal protein S5 domain 2-like"/>
    <property type="match status" value="1"/>
</dbReference>
<reference key="1">
    <citation type="journal article" date="2001" name="Proc. Natl. Acad. Sci. U.S.A.">
        <title>Genome sequence of an industrial microorganism Streptomyces avermitilis: deducing the ability of producing secondary metabolites.</title>
        <authorList>
            <person name="Omura S."/>
            <person name="Ikeda H."/>
            <person name="Ishikawa J."/>
            <person name="Hanamoto A."/>
            <person name="Takahashi C."/>
            <person name="Shinose M."/>
            <person name="Takahashi Y."/>
            <person name="Horikawa H."/>
            <person name="Nakazawa H."/>
            <person name="Osonoe T."/>
            <person name="Kikuchi H."/>
            <person name="Shiba T."/>
            <person name="Sakaki Y."/>
            <person name="Hattori M."/>
        </authorList>
    </citation>
    <scope>NUCLEOTIDE SEQUENCE [LARGE SCALE GENOMIC DNA]</scope>
    <source>
        <strain>ATCC 31267 / DSM 46492 / JCM 5070 / NBRC 14893 / NCIMB 12804 / NRRL 8165 / MA-4680</strain>
    </source>
</reference>
<reference key="2">
    <citation type="journal article" date="2003" name="Nat. Biotechnol.">
        <title>Complete genome sequence and comparative analysis of the industrial microorganism Streptomyces avermitilis.</title>
        <authorList>
            <person name="Ikeda H."/>
            <person name="Ishikawa J."/>
            <person name="Hanamoto A."/>
            <person name="Shinose M."/>
            <person name="Kikuchi H."/>
            <person name="Shiba T."/>
            <person name="Sakaki Y."/>
            <person name="Hattori M."/>
            <person name="Omura S."/>
        </authorList>
    </citation>
    <scope>NUCLEOTIDE SEQUENCE [LARGE SCALE GENOMIC DNA]</scope>
    <source>
        <strain>ATCC 31267 / DSM 46492 / JCM 5070 / NBRC 14893 / NCIMB 12804 / NRRL 8165 / MA-4680</strain>
    </source>
</reference>
<comment type="function">
    <text evidence="1">Catalyzes the phosphorylation of the position 2 hydroxy group of 4-diphosphocytidyl-2C-methyl-D-erythritol.</text>
</comment>
<comment type="catalytic activity">
    <reaction evidence="1">
        <text>4-CDP-2-C-methyl-D-erythritol + ATP = 4-CDP-2-C-methyl-D-erythritol 2-phosphate + ADP + H(+)</text>
        <dbReference type="Rhea" id="RHEA:18437"/>
        <dbReference type="ChEBI" id="CHEBI:15378"/>
        <dbReference type="ChEBI" id="CHEBI:30616"/>
        <dbReference type="ChEBI" id="CHEBI:57823"/>
        <dbReference type="ChEBI" id="CHEBI:57919"/>
        <dbReference type="ChEBI" id="CHEBI:456216"/>
        <dbReference type="EC" id="2.7.1.148"/>
    </reaction>
</comment>
<comment type="pathway">
    <text evidence="1">Isoprenoid biosynthesis; isopentenyl diphosphate biosynthesis via DXP pathway; isopentenyl diphosphate from 1-deoxy-D-xylulose 5-phosphate: step 3/6.</text>
</comment>
<comment type="similarity">
    <text evidence="1">Belongs to the GHMP kinase family. IspE subfamily.</text>
</comment>
<sequence length="297" mass="29714">MSVTVRVPAKVNVQLAVGGARPDGFHDLANVFLAVGLYDEVTATPADELRITCEGPDAAQVPLDRTNLAARAAIALAARHGLAPDVHLHIAKDIPVAGGMAGGSADAAGALLACDTLWGTNASRGELLDICAELGSDVPFSLVGGAALGTGRGERLRELEVGGTFHWVFAVADGGLSTPAVYGEFDRLSEGVRVPEPVASQELLDALAKGDAVALAAAVSNDLQPAALSLFPSLSDTLEAGRAAGALAALVSGSGPTTAFLTRDADGADAVAQALLASGTCRTARVAPSPAPGATVL</sequence>
<name>ISPE_STRAW</name>
<proteinExistence type="inferred from homology"/>
<organism>
    <name type="scientific">Streptomyces avermitilis (strain ATCC 31267 / DSM 46492 / JCM 5070 / NBRC 14893 / NCIMB 12804 / NRRL 8165 / MA-4680)</name>
    <dbReference type="NCBI Taxonomy" id="227882"/>
    <lineage>
        <taxon>Bacteria</taxon>
        <taxon>Bacillati</taxon>
        <taxon>Actinomycetota</taxon>
        <taxon>Actinomycetes</taxon>
        <taxon>Kitasatosporales</taxon>
        <taxon>Streptomycetaceae</taxon>
        <taxon>Streptomyces</taxon>
    </lineage>
</organism>
<keyword id="KW-0067">ATP-binding</keyword>
<keyword id="KW-0414">Isoprene biosynthesis</keyword>
<keyword id="KW-0418">Kinase</keyword>
<keyword id="KW-0547">Nucleotide-binding</keyword>
<keyword id="KW-1185">Reference proteome</keyword>
<keyword id="KW-0808">Transferase</keyword>
<feature type="chain" id="PRO_0000189271" description="4-diphosphocytidyl-2-C-methyl-D-erythritol kinase">
    <location>
        <begin position="1"/>
        <end position="297"/>
    </location>
</feature>
<feature type="active site" evidence="1">
    <location>
        <position position="10"/>
    </location>
</feature>
<feature type="active site" evidence="1">
    <location>
        <position position="137"/>
    </location>
</feature>
<feature type="binding site" evidence="1">
    <location>
        <begin position="95"/>
        <end position="105"/>
    </location>
    <ligand>
        <name>ATP</name>
        <dbReference type="ChEBI" id="CHEBI:30616"/>
    </ligand>
</feature>
<accession>Q820G3</accession>